<keyword id="KW-0687">Ribonucleoprotein</keyword>
<keyword id="KW-0689">Ribosomal protein</keyword>
<comment type="function">
    <text evidence="1">Forms part of the ribosomal stalk which helps the ribosome interact with GTP-bound translation factors. Is thus essential for accurate translation.</text>
</comment>
<comment type="subunit">
    <text evidence="1">Homodimer. Part of the ribosomal stalk of the 50S ribosomal subunit. Forms a multimeric L10(L12)X complex, where L10 forms an elongated spine to which 2 to 4 L12 dimers bind in a sequential fashion. Binds GTP-bound translation factors.</text>
</comment>
<comment type="similarity">
    <text evidence="1">Belongs to the bacterial ribosomal protein bL12 family.</text>
</comment>
<accession>A2REM4</accession>
<name>RL7_STRPG</name>
<organism>
    <name type="scientific">Streptococcus pyogenes serotype M5 (strain Manfredo)</name>
    <dbReference type="NCBI Taxonomy" id="160491"/>
    <lineage>
        <taxon>Bacteria</taxon>
        <taxon>Bacillati</taxon>
        <taxon>Bacillota</taxon>
        <taxon>Bacilli</taxon>
        <taxon>Lactobacillales</taxon>
        <taxon>Streptococcaceae</taxon>
        <taxon>Streptococcus</taxon>
    </lineage>
</organism>
<sequence length="121" mass="12256">MALNIENIIAEIKEASILELNDLVKAIEEEFGVTAAAPVAAAAAGGAEEAAKDSFDVELTSAGDKKVGVIKAVREITGLGLKEAKGLVDGAPANVKEGVAAAEAEEIKAKLEEAGATITLK</sequence>
<feature type="chain" id="PRO_1000007097" description="Large ribosomal subunit protein bL12">
    <location>
        <begin position="1"/>
        <end position="121"/>
    </location>
</feature>
<reference key="1">
    <citation type="journal article" date="2007" name="J. Bacteriol.">
        <title>Complete genome of acute rheumatic fever-associated serotype M5 Streptococcus pyogenes strain Manfredo.</title>
        <authorList>
            <person name="Holden M.T.G."/>
            <person name="Scott A."/>
            <person name="Cherevach I."/>
            <person name="Chillingworth T."/>
            <person name="Churcher C."/>
            <person name="Cronin A."/>
            <person name="Dowd L."/>
            <person name="Feltwell T."/>
            <person name="Hamlin N."/>
            <person name="Holroyd S."/>
            <person name="Jagels K."/>
            <person name="Moule S."/>
            <person name="Mungall K."/>
            <person name="Quail M.A."/>
            <person name="Price C."/>
            <person name="Rabbinowitsch E."/>
            <person name="Sharp S."/>
            <person name="Skelton J."/>
            <person name="Whitehead S."/>
            <person name="Barrell B.G."/>
            <person name="Kehoe M."/>
            <person name="Parkhill J."/>
        </authorList>
    </citation>
    <scope>NUCLEOTIDE SEQUENCE [LARGE SCALE GENOMIC DNA]</scope>
    <source>
        <strain>Manfredo</strain>
    </source>
</reference>
<gene>
    <name evidence="1" type="primary">rplL</name>
    <name type="ordered locus">SpyM50972</name>
</gene>
<evidence type="ECO:0000255" key="1">
    <source>
        <dbReference type="HAMAP-Rule" id="MF_00368"/>
    </source>
</evidence>
<evidence type="ECO:0000305" key="2"/>
<dbReference type="EMBL" id="AM295007">
    <property type="protein sequence ID" value="CAM30299.1"/>
    <property type="molecule type" value="Genomic_DNA"/>
</dbReference>
<dbReference type="RefSeq" id="WP_002984819.1">
    <property type="nucleotide sequence ID" value="NC_009332.1"/>
</dbReference>
<dbReference type="SMR" id="A2REM4"/>
<dbReference type="GeneID" id="69900915"/>
<dbReference type="KEGG" id="spf:SpyM50972"/>
<dbReference type="HOGENOM" id="CLU_086499_3_2_9"/>
<dbReference type="GO" id="GO:0022625">
    <property type="term" value="C:cytosolic large ribosomal subunit"/>
    <property type="evidence" value="ECO:0007669"/>
    <property type="project" value="TreeGrafter"/>
</dbReference>
<dbReference type="GO" id="GO:0003729">
    <property type="term" value="F:mRNA binding"/>
    <property type="evidence" value="ECO:0007669"/>
    <property type="project" value="TreeGrafter"/>
</dbReference>
<dbReference type="GO" id="GO:0003735">
    <property type="term" value="F:structural constituent of ribosome"/>
    <property type="evidence" value="ECO:0007669"/>
    <property type="project" value="InterPro"/>
</dbReference>
<dbReference type="GO" id="GO:0006412">
    <property type="term" value="P:translation"/>
    <property type="evidence" value="ECO:0007669"/>
    <property type="project" value="UniProtKB-UniRule"/>
</dbReference>
<dbReference type="CDD" id="cd00387">
    <property type="entry name" value="Ribosomal_L7_L12"/>
    <property type="match status" value="1"/>
</dbReference>
<dbReference type="FunFam" id="3.30.1390.10:FF:000001">
    <property type="entry name" value="50S ribosomal protein L7/L12"/>
    <property type="match status" value="1"/>
</dbReference>
<dbReference type="Gene3D" id="3.30.1390.10">
    <property type="match status" value="1"/>
</dbReference>
<dbReference type="Gene3D" id="1.20.5.710">
    <property type="entry name" value="Single helix bin"/>
    <property type="match status" value="1"/>
</dbReference>
<dbReference type="HAMAP" id="MF_00368">
    <property type="entry name" value="Ribosomal_bL12"/>
    <property type="match status" value="1"/>
</dbReference>
<dbReference type="InterPro" id="IPR000206">
    <property type="entry name" value="Ribosomal_bL12"/>
</dbReference>
<dbReference type="InterPro" id="IPR013823">
    <property type="entry name" value="Ribosomal_bL12_C"/>
</dbReference>
<dbReference type="InterPro" id="IPR014719">
    <property type="entry name" value="Ribosomal_bL12_C/ClpS-like"/>
</dbReference>
<dbReference type="InterPro" id="IPR008932">
    <property type="entry name" value="Ribosomal_bL12_oligo"/>
</dbReference>
<dbReference type="InterPro" id="IPR036235">
    <property type="entry name" value="Ribosomal_bL12_oligo_N_sf"/>
</dbReference>
<dbReference type="NCBIfam" id="TIGR00855">
    <property type="entry name" value="L12"/>
    <property type="match status" value="1"/>
</dbReference>
<dbReference type="PANTHER" id="PTHR45987">
    <property type="entry name" value="39S RIBOSOMAL PROTEIN L12"/>
    <property type="match status" value="1"/>
</dbReference>
<dbReference type="PANTHER" id="PTHR45987:SF4">
    <property type="entry name" value="LARGE RIBOSOMAL SUBUNIT PROTEIN BL12M"/>
    <property type="match status" value="1"/>
</dbReference>
<dbReference type="Pfam" id="PF00542">
    <property type="entry name" value="Ribosomal_L12"/>
    <property type="match status" value="1"/>
</dbReference>
<dbReference type="Pfam" id="PF16320">
    <property type="entry name" value="Ribosomal_L12_N"/>
    <property type="match status" value="1"/>
</dbReference>
<dbReference type="SUPFAM" id="SSF54736">
    <property type="entry name" value="ClpS-like"/>
    <property type="match status" value="1"/>
</dbReference>
<dbReference type="SUPFAM" id="SSF48300">
    <property type="entry name" value="Ribosomal protein L7/12, oligomerisation (N-terminal) domain"/>
    <property type="match status" value="1"/>
</dbReference>
<proteinExistence type="inferred from homology"/>
<protein>
    <recommendedName>
        <fullName evidence="1">Large ribosomal subunit protein bL12</fullName>
    </recommendedName>
    <alternativeName>
        <fullName evidence="2">50S ribosomal protein L7/L12</fullName>
    </alternativeName>
</protein>